<accession>Q9H091</accession>
<accession>B4DXY5</accession>
<accession>I3L296</accession>
<feature type="chain" id="PRO_0000218317" description="Zinc finger MYND domain-containing protein 15">
    <location>
        <begin position="1"/>
        <end position="742"/>
    </location>
</feature>
<feature type="zinc finger region" description="MYND-type" evidence="3">
    <location>
        <begin position="313"/>
        <end position="359"/>
    </location>
</feature>
<feature type="region of interest" description="Disordered" evidence="4">
    <location>
        <begin position="109"/>
        <end position="199"/>
    </location>
</feature>
<feature type="region of interest" description="Disordered" evidence="4">
    <location>
        <begin position="565"/>
        <end position="590"/>
    </location>
</feature>
<feature type="region of interest" description="Disordered" evidence="4">
    <location>
        <begin position="701"/>
        <end position="742"/>
    </location>
</feature>
<feature type="compositionally biased region" description="Acidic residues" evidence="4">
    <location>
        <begin position="110"/>
        <end position="127"/>
    </location>
</feature>
<feature type="compositionally biased region" description="Polar residues" evidence="4">
    <location>
        <begin position="151"/>
        <end position="161"/>
    </location>
</feature>
<feature type="compositionally biased region" description="Basic and acidic residues" evidence="4">
    <location>
        <begin position="166"/>
        <end position="189"/>
    </location>
</feature>
<feature type="compositionally biased region" description="Pro residues" evidence="4">
    <location>
        <begin position="708"/>
        <end position="724"/>
    </location>
</feature>
<feature type="compositionally biased region" description="Basic residues" evidence="4">
    <location>
        <begin position="725"/>
        <end position="742"/>
    </location>
</feature>
<feature type="binding site" evidence="3">
    <location>
        <position position="313"/>
    </location>
    <ligand>
        <name>Zn(2+)</name>
        <dbReference type="ChEBI" id="CHEBI:29105"/>
        <label>1</label>
    </ligand>
</feature>
<feature type="binding site" evidence="3">
    <location>
        <position position="316"/>
    </location>
    <ligand>
        <name>Zn(2+)</name>
        <dbReference type="ChEBI" id="CHEBI:29105"/>
        <label>1</label>
    </ligand>
</feature>
<feature type="binding site" evidence="3">
    <location>
        <position position="328"/>
    </location>
    <ligand>
        <name>Zn(2+)</name>
        <dbReference type="ChEBI" id="CHEBI:29105"/>
        <label>2</label>
    </ligand>
</feature>
<feature type="binding site" evidence="3">
    <location>
        <position position="331"/>
    </location>
    <ligand>
        <name>Zn(2+)</name>
        <dbReference type="ChEBI" id="CHEBI:29105"/>
        <label>2</label>
    </ligand>
</feature>
<feature type="binding site" evidence="3">
    <location>
        <position position="337"/>
    </location>
    <ligand>
        <name>Zn(2+)</name>
        <dbReference type="ChEBI" id="CHEBI:29105"/>
        <label>1</label>
    </ligand>
</feature>
<feature type="binding site" evidence="3">
    <location>
        <position position="341"/>
    </location>
    <ligand>
        <name>Zn(2+)</name>
        <dbReference type="ChEBI" id="CHEBI:29105"/>
        <label>1</label>
    </ligand>
</feature>
<feature type="binding site" evidence="3">
    <location>
        <position position="355"/>
    </location>
    <ligand>
        <name>Zn(2+)</name>
        <dbReference type="ChEBI" id="CHEBI:29105"/>
        <label>2</label>
    </ligand>
</feature>
<feature type="binding site" evidence="3">
    <location>
        <position position="359"/>
    </location>
    <ligand>
        <name>Zn(2+)</name>
        <dbReference type="ChEBI" id="CHEBI:29105"/>
        <label>2</label>
    </ligand>
</feature>
<feature type="splice variant" id="VSP_042144" description="In isoform 2." evidence="6">
    <original>GSWQDYYTWRGLSLDSPIAVLLTYPLTVYYVITHLVPQSF</original>
    <variation>V</variation>
    <location>
        <begin position="460"/>
        <end position="499"/>
    </location>
</feature>
<feature type="splice variant" id="VSP_047208" description="In isoform 3." evidence="7">
    <original>I</original>
    <variation>IASPSSLSA</variation>
    <location>
        <position position="612"/>
    </location>
</feature>
<feature type="sequence variant" id="VAR_052992" description="In dbSNP:rs35005394.">
    <original>R</original>
    <variation>H</variation>
    <location>
        <position position="401"/>
    </location>
</feature>
<gene>
    <name type="primary">ZMYND15</name>
</gene>
<evidence type="ECO:0000250" key="1"/>
<evidence type="ECO:0000250" key="2">
    <source>
        <dbReference type="UniProtKB" id="Q8C0R7"/>
    </source>
</evidence>
<evidence type="ECO:0000255" key="3">
    <source>
        <dbReference type="PROSITE-ProRule" id="PRU00134"/>
    </source>
</evidence>
<evidence type="ECO:0000256" key="4">
    <source>
        <dbReference type="SAM" id="MobiDB-lite"/>
    </source>
</evidence>
<evidence type="ECO:0000269" key="5">
    <source>
    </source>
</evidence>
<evidence type="ECO:0000303" key="6">
    <source>
    </source>
</evidence>
<evidence type="ECO:0000303" key="7">
    <source>
    </source>
</evidence>
<evidence type="ECO:0000303" key="8">
    <source>
    </source>
</evidence>
<reference key="1">
    <citation type="journal article" date="2001" name="Genome Res.">
        <title>Towards a catalog of human genes and proteins: sequencing and analysis of 500 novel complete protein coding human cDNAs.</title>
        <authorList>
            <person name="Wiemann S."/>
            <person name="Weil B."/>
            <person name="Wellenreuther R."/>
            <person name="Gassenhuber J."/>
            <person name="Glassl S."/>
            <person name="Ansorge W."/>
            <person name="Boecher M."/>
            <person name="Bloecker H."/>
            <person name="Bauersachs S."/>
            <person name="Blum H."/>
            <person name="Lauber J."/>
            <person name="Duesterhoeft A."/>
            <person name="Beyer A."/>
            <person name="Koehrer K."/>
            <person name="Strack N."/>
            <person name="Mewes H.-W."/>
            <person name="Ottenwaelder B."/>
            <person name="Obermaier B."/>
            <person name="Tampe J."/>
            <person name="Heubner D."/>
            <person name="Wambutt R."/>
            <person name="Korn B."/>
            <person name="Klein M."/>
            <person name="Poustka A."/>
        </authorList>
    </citation>
    <scope>NUCLEOTIDE SEQUENCE [LARGE SCALE MRNA] (ISOFORM 2)</scope>
    <source>
        <tissue>Testis</tissue>
    </source>
</reference>
<reference key="2">
    <citation type="journal article" date="2004" name="Nat. Genet.">
        <title>Complete sequencing and characterization of 21,243 full-length human cDNAs.</title>
        <authorList>
            <person name="Ota T."/>
            <person name="Suzuki Y."/>
            <person name="Nishikawa T."/>
            <person name="Otsuki T."/>
            <person name="Sugiyama T."/>
            <person name="Irie R."/>
            <person name="Wakamatsu A."/>
            <person name="Hayashi K."/>
            <person name="Sato H."/>
            <person name="Nagai K."/>
            <person name="Kimura K."/>
            <person name="Makita H."/>
            <person name="Sekine M."/>
            <person name="Obayashi M."/>
            <person name="Nishi T."/>
            <person name="Shibahara T."/>
            <person name="Tanaka T."/>
            <person name="Ishii S."/>
            <person name="Yamamoto J."/>
            <person name="Saito K."/>
            <person name="Kawai Y."/>
            <person name="Isono Y."/>
            <person name="Nakamura Y."/>
            <person name="Nagahari K."/>
            <person name="Murakami K."/>
            <person name="Yasuda T."/>
            <person name="Iwayanagi T."/>
            <person name="Wagatsuma M."/>
            <person name="Shiratori A."/>
            <person name="Sudo H."/>
            <person name="Hosoiri T."/>
            <person name="Kaku Y."/>
            <person name="Kodaira H."/>
            <person name="Kondo H."/>
            <person name="Sugawara M."/>
            <person name="Takahashi M."/>
            <person name="Kanda K."/>
            <person name="Yokoi T."/>
            <person name="Furuya T."/>
            <person name="Kikkawa E."/>
            <person name="Omura Y."/>
            <person name="Abe K."/>
            <person name="Kamihara K."/>
            <person name="Katsuta N."/>
            <person name="Sato K."/>
            <person name="Tanikawa M."/>
            <person name="Yamazaki M."/>
            <person name="Ninomiya K."/>
            <person name="Ishibashi T."/>
            <person name="Yamashita H."/>
            <person name="Murakawa K."/>
            <person name="Fujimori K."/>
            <person name="Tanai H."/>
            <person name="Kimata M."/>
            <person name="Watanabe M."/>
            <person name="Hiraoka S."/>
            <person name="Chiba Y."/>
            <person name="Ishida S."/>
            <person name="Ono Y."/>
            <person name="Takiguchi S."/>
            <person name="Watanabe S."/>
            <person name="Yosida M."/>
            <person name="Hotuta T."/>
            <person name="Kusano J."/>
            <person name="Kanehori K."/>
            <person name="Takahashi-Fujii A."/>
            <person name="Hara H."/>
            <person name="Tanase T.-O."/>
            <person name="Nomura Y."/>
            <person name="Togiya S."/>
            <person name="Komai F."/>
            <person name="Hara R."/>
            <person name="Takeuchi K."/>
            <person name="Arita M."/>
            <person name="Imose N."/>
            <person name="Musashino K."/>
            <person name="Yuuki H."/>
            <person name="Oshima A."/>
            <person name="Sasaki N."/>
            <person name="Aotsuka S."/>
            <person name="Yoshikawa Y."/>
            <person name="Matsunawa H."/>
            <person name="Ichihara T."/>
            <person name="Shiohata N."/>
            <person name="Sano S."/>
            <person name="Moriya S."/>
            <person name="Momiyama H."/>
            <person name="Satoh N."/>
            <person name="Takami S."/>
            <person name="Terashima Y."/>
            <person name="Suzuki O."/>
            <person name="Nakagawa S."/>
            <person name="Senoh A."/>
            <person name="Mizoguchi H."/>
            <person name="Goto Y."/>
            <person name="Shimizu F."/>
            <person name="Wakebe H."/>
            <person name="Hishigaki H."/>
            <person name="Watanabe T."/>
            <person name="Sugiyama A."/>
            <person name="Takemoto M."/>
            <person name="Kawakami B."/>
            <person name="Yamazaki M."/>
            <person name="Watanabe K."/>
            <person name="Kumagai A."/>
            <person name="Itakura S."/>
            <person name="Fukuzumi Y."/>
            <person name="Fujimori Y."/>
            <person name="Komiyama M."/>
            <person name="Tashiro H."/>
            <person name="Tanigami A."/>
            <person name="Fujiwara T."/>
            <person name="Ono T."/>
            <person name="Yamada K."/>
            <person name="Fujii Y."/>
            <person name="Ozaki K."/>
            <person name="Hirao M."/>
            <person name="Ohmori Y."/>
            <person name="Kawabata A."/>
            <person name="Hikiji T."/>
            <person name="Kobatake N."/>
            <person name="Inagaki H."/>
            <person name="Ikema Y."/>
            <person name="Okamoto S."/>
            <person name="Okitani R."/>
            <person name="Kawakami T."/>
            <person name="Noguchi S."/>
            <person name="Itoh T."/>
            <person name="Shigeta K."/>
            <person name="Senba T."/>
            <person name="Matsumura K."/>
            <person name="Nakajima Y."/>
            <person name="Mizuno T."/>
            <person name="Morinaga M."/>
            <person name="Sasaki M."/>
            <person name="Togashi T."/>
            <person name="Oyama M."/>
            <person name="Hata H."/>
            <person name="Watanabe M."/>
            <person name="Komatsu T."/>
            <person name="Mizushima-Sugano J."/>
            <person name="Satoh T."/>
            <person name="Shirai Y."/>
            <person name="Takahashi Y."/>
            <person name="Nakagawa K."/>
            <person name="Okumura K."/>
            <person name="Nagase T."/>
            <person name="Nomura N."/>
            <person name="Kikuchi H."/>
            <person name="Masuho Y."/>
            <person name="Yamashita R."/>
            <person name="Nakai K."/>
            <person name="Yada T."/>
            <person name="Nakamura Y."/>
            <person name="Ohara O."/>
            <person name="Isogai T."/>
            <person name="Sugano S."/>
        </authorList>
    </citation>
    <scope>NUCLEOTIDE SEQUENCE [LARGE SCALE MRNA] (ISOFORM 1)</scope>
</reference>
<reference key="3">
    <citation type="journal article" date="2006" name="Nature">
        <title>DNA sequence of human chromosome 17 and analysis of rearrangement in the human lineage.</title>
        <authorList>
            <person name="Zody M.C."/>
            <person name="Garber M."/>
            <person name="Adams D.J."/>
            <person name="Sharpe T."/>
            <person name="Harrow J."/>
            <person name="Lupski J.R."/>
            <person name="Nicholson C."/>
            <person name="Searle S.M."/>
            <person name="Wilming L."/>
            <person name="Young S.K."/>
            <person name="Abouelleil A."/>
            <person name="Allen N.R."/>
            <person name="Bi W."/>
            <person name="Bloom T."/>
            <person name="Borowsky M.L."/>
            <person name="Bugalter B.E."/>
            <person name="Butler J."/>
            <person name="Chang J.L."/>
            <person name="Chen C.-K."/>
            <person name="Cook A."/>
            <person name="Corum B."/>
            <person name="Cuomo C.A."/>
            <person name="de Jong P.J."/>
            <person name="DeCaprio D."/>
            <person name="Dewar K."/>
            <person name="FitzGerald M."/>
            <person name="Gilbert J."/>
            <person name="Gibson R."/>
            <person name="Gnerre S."/>
            <person name="Goldstein S."/>
            <person name="Grafham D.V."/>
            <person name="Grocock R."/>
            <person name="Hafez N."/>
            <person name="Hagopian D.S."/>
            <person name="Hart E."/>
            <person name="Norman C.H."/>
            <person name="Humphray S."/>
            <person name="Jaffe D.B."/>
            <person name="Jones M."/>
            <person name="Kamal M."/>
            <person name="Khodiyar V.K."/>
            <person name="LaButti K."/>
            <person name="Laird G."/>
            <person name="Lehoczky J."/>
            <person name="Liu X."/>
            <person name="Lokyitsang T."/>
            <person name="Loveland J."/>
            <person name="Lui A."/>
            <person name="Macdonald P."/>
            <person name="Major J.E."/>
            <person name="Matthews L."/>
            <person name="Mauceli E."/>
            <person name="McCarroll S.A."/>
            <person name="Mihalev A.H."/>
            <person name="Mudge J."/>
            <person name="Nguyen C."/>
            <person name="Nicol R."/>
            <person name="O'Leary S.B."/>
            <person name="Osoegawa K."/>
            <person name="Schwartz D.C."/>
            <person name="Shaw-Smith C."/>
            <person name="Stankiewicz P."/>
            <person name="Steward C."/>
            <person name="Swarbreck D."/>
            <person name="Venkataraman V."/>
            <person name="Whittaker C.A."/>
            <person name="Yang X."/>
            <person name="Zimmer A.R."/>
            <person name="Bradley A."/>
            <person name="Hubbard T."/>
            <person name="Birren B.W."/>
            <person name="Rogers J."/>
            <person name="Lander E.S."/>
            <person name="Nusbaum C."/>
        </authorList>
    </citation>
    <scope>NUCLEOTIDE SEQUENCE [LARGE SCALE GENOMIC DNA]</scope>
</reference>
<reference key="4">
    <citation type="submission" date="2005-07" db="EMBL/GenBank/DDBJ databases">
        <authorList>
            <person name="Mural R.J."/>
            <person name="Istrail S."/>
            <person name="Sutton G.G."/>
            <person name="Florea L."/>
            <person name="Halpern A.L."/>
            <person name="Mobarry C.M."/>
            <person name="Lippert R."/>
            <person name="Walenz B."/>
            <person name="Shatkay H."/>
            <person name="Dew I."/>
            <person name="Miller J.R."/>
            <person name="Flanigan M.J."/>
            <person name="Edwards N.J."/>
            <person name="Bolanos R."/>
            <person name="Fasulo D."/>
            <person name="Halldorsson B.V."/>
            <person name="Hannenhalli S."/>
            <person name="Turner R."/>
            <person name="Yooseph S."/>
            <person name="Lu F."/>
            <person name="Nusskern D.R."/>
            <person name="Shue B.C."/>
            <person name="Zheng X.H."/>
            <person name="Zhong F."/>
            <person name="Delcher A.L."/>
            <person name="Huson D.H."/>
            <person name="Kravitz S.A."/>
            <person name="Mouchard L."/>
            <person name="Reinert K."/>
            <person name="Remington K.A."/>
            <person name="Clark A.G."/>
            <person name="Waterman M.S."/>
            <person name="Eichler E.E."/>
            <person name="Adams M.D."/>
            <person name="Hunkapiller M.W."/>
            <person name="Myers E.W."/>
            <person name="Venter J.C."/>
        </authorList>
    </citation>
    <scope>NUCLEOTIDE SEQUENCE [LARGE SCALE GENOMIC DNA]</scope>
</reference>
<reference key="5">
    <citation type="journal article" date="2004" name="Genome Res.">
        <title>The status, quality, and expansion of the NIH full-length cDNA project: the Mammalian Gene Collection (MGC).</title>
        <authorList>
            <consortium name="The MGC Project Team"/>
        </authorList>
    </citation>
    <scope>NUCLEOTIDE SEQUENCE [LARGE SCALE MRNA] (ISOFORM 3)</scope>
</reference>
<reference key="6">
    <citation type="journal article" date="2014" name="J. Med. Genet.">
        <title>Truncating mutations in TAF4B and ZMYND15 causing recessive azoospermia.</title>
        <authorList>
            <person name="Ayhan O."/>
            <person name="Balkan M."/>
            <person name="Guven A."/>
            <person name="Hazan R."/>
            <person name="Atar M."/>
            <person name="Tok A."/>
            <person name="Tolun A."/>
        </authorList>
    </citation>
    <scope>INVOLVEMENT IN SPGF14</scope>
    <scope>POSSIBLE FUNCTION</scope>
</reference>
<organism>
    <name type="scientific">Homo sapiens</name>
    <name type="common">Human</name>
    <dbReference type="NCBI Taxonomy" id="9606"/>
    <lineage>
        <taxon>Eukaryota</taxon>
        <taxon>Metazoa</taxon>
        <taxon>Chordata</taxon>
        <taxon>Craniata</taxon>
        <taxon>Vertebrata</taxon>
        <taxon>Euteleostomi</taxon>
        <taxon>Mammalia</taxon>
        <taxon>Eutheria</taxon>
        <taxon>Euarchontoglires</taxon>
        <taxon>Primates</taxon>
        <taxon>Haplorrhini</taxon>
        <taxon>Catarrhini</taxon>
        <taxon>Hominidae</taxon>
        <taxon>Homo</taxon>
    </lineage>
</organism>
<dbReference type="EMBL" id="AK302181">
    <property type="protein sequence ID" value="BAG63547.1"/>
    <property type="molecule type" value="mRNA"/>
</dbReference>
<dbReference type="EMBL" id="AL136893">
    <property type="protein sequence ID" value="CAB66827.1"/>
    <property type="molecule type" value="mRNA"/>
</dbReference>
<dbReference type="EMBL" id="AC091153">
    <property type="status" value="NOT_ANNOTATED_CDS"/>
    <property type="molecule type" value="Genomic_DNA"/>
</dbReference>
<dbReference type="EMBL" id="CH471108">
    <property type="protein sequence ID" value="EAW90414.1"/>
    <property type="molecule type" value="Genomic_DNA"/>
</dbReference>
<dbReference type="EMBL" id="BC067296">
    <property type="status" value="NOT_ANNOTATED_CDS"/>
    <property type="molecule type" value="mRNA"/>
</dbReference>
<dbReference type="CCDS" id="CCDS11053.1">
    <molecule id="Q9H091-2"/>
</dbReference>
<dbReference type="CCDS" id="CCDS45584.1">
    <molecule id="Q9H091-1"/>
</dbReference>
<dbReference type="CCDS" id="CCDS58506.1">
    <molecule id="Q9H091-3"/>
</dbReference>
<dbReference type="RefSeq" id="NP_001129518.1">
    <molecule id="Q9H091-1"/>
    <property type="nucleotide sequence ID" value="NM_001136046.3"/>
</dbReference>
<dbReference type="RefSeq" id="NP_001254751.1">
    <molecule id="Q9H091-3"/>
    <property type="nucleotide sequence ID" value="NM_001267822.1"/>
</dbReference>
<dbReference type="RefSeq" id="NP_115641.1">
    <molecule id="Q9H091-2"/>
    <property type="nucleotide sequence ID" value="NM_032265.2"/>
</dbReference>
<dbReference type="BioGRID" id="123959">
    <property type="interactions" value="1"/>
</dbReference>
<dbReference type="FunCoup" id="Q9H091">
    <property type="interactions" value="1"/>
</dbReference>
<dbReference type="STRING" id="9606.ENSP00000269289"/>
<dbReference type="GlyGen" id="Q9H091">
    <property type="glycosylation" value="1 site"/>
</dbReference>
<dbReference type="iPTMnet" id="Q9H091"/>
<dbReference type="PhosphoSitePlus" id="Q9H091"/>
<dbReference type="BioMuta" id="ZMYND15"/>
<dbReference type="DMDM" id="374095468"/>
<dbReference type="jPOST" id="Q9H091"/>
<dbReference type="MassIVE" id="Q9H091"/>
<dbReference type="PaxDb" id="9606-ENSP00000269289"/>
<dbReference type="PeptideAtlas" id="Q9H091"/>
<dbReference type="ProteomicsDB" id="46881"/>
<dbReference type="ProteomicsDB" id="80218">
    <molecule id="Q9H091-1"/>
</dbReference>
<dbReference type="ProteomicsDB" id="80219">
    <molecule id="Q9H091-2"/>
</dbReference>
<dbReference type="Antibodypedia" id="11307">
    <property type="antibodies" value="15 antibodies from 8 providers"/>
</dbReference>
<dbReference type="DNASU" id="84225"/>
<dbReference type="Ensembl" id="ENST00000269289.10">
    <molecule id="Q9H091-3"/>
    <property type="protein sequence ID" value="ENSP00000269289.6"/>
    <property type="gene ID" value="ENSG00000141497.14"/>
</dbReference>
<dbReference type="Ensembl" id="ENST00000433935.6">
    <molecule id="Q9H091-1"/>
    <property type="protein sequence ID" value="ENSP00000391742.1"/>
    <property type="gene ID" value="ENSG00000141497.14"/>
</dbReference>
<dbReference type="Ensembl" id="ENST00000573751.2">
    <molecule id="Q9H091-3"/>
    <property type="protein sequence ID" value="ENSP00000459501.1"/>
    <property type="gene ID" value="ENSG00000141497.14"/>
</dbReference>
<dbReference type="Ensembl" id="ENST00000592813.5">
    <molecule id="Q9H091-2"/>
    <property type="protein sequence ID" value="ENSP00000465435.1"/>
    <property type="gene ID" value="ENSG00000141497.14"/>
</dbReference>
<dbReference type="GeneID" id="84225"/>
<dbReference type="KEGG" id="hsa:84225"/>
<dbReference type="MANE-Select" id="ENST00000433935.6">
    <property type="protein sequence ID" value="ENSP00000391742.1"/>
    <property type="RefSeq nucleotide sequence ID" value="NM_001136046.3"/>
    <property type="RefSeq protein sequence ID" value="NP_001129518.1"/>
</dbReference>
<dbReference type="UCSC" id="uc002fyt.4">
    <molecule id="Q9H091-1"/>
    <property type="organism name" value="human"/>
</dbReference>
<dbReference type="AGR" id="HGNC:20997"/>
<dbReference type="CTD" id="84225"/>
<dbReference type="DisGeNET" id="84225"/>
<dbReference type="GeneCards" id="ZMYND15"/>
<dbReference type="HGNC" id="HGNC:20997">
    <property type="gene designation" value="ZMYND15"/>
</dbReference>
<dbReference type="HPA" id="ENSG00000141497">
    <property type="expression patterns" value="Tissue enriched (testis)"/>
</dbReference>
<dbReference type="MalaCards" id="ZMYND15"/>
<dbReference type="MIM" id="614312">
    <property type="type" value="gene"/>
</dbReference>
<dbReference type="MIM" id="615842">
    <property type="type" value="phenotype"/>
</dbReference>
<dbReference type="neXtProt" id="NX_Q9H091"/>
<dbReference type="OpenTargets" id="ENSG00000141497"/>
<dbReference type="Orphanet" id="399805">
    <property type="disease" value="Male infertility with azoospermia or oligozoospermia due to single gene mutation"/>
</dbReference>
<dbReference type="PharmGKB" id="PA134873463"/>
<dbReference type="VEuPathDB" id="HostDB:ENSG00000141497"/>
<dbReference type="eggNOG" id="KOG2084">
    <property type="taxonomic scope" value="Eukaryota"/>
</dbReference>
<dbReference type="GeneTree" id="ENSGT00390000000527"/>
<dbReference type="HOGENOM" id="CLU_022430_0_0_1"/>
<dbReference type="InParanoid" id="Q9H091"/>
<dbReference type="OMA" id="FTECSAY"/>
<dbReference type="OrthoDB" id="5282002at2759"/>
<dbReference type="PAN-GO" id="Q9H091">
    <property type="GO annotations" value="3 GO annotations based on evolutionary models"/>
</dbReference>
<dbReference type="PhylomeDB" id="Q9H091"/>
<dbReference type="TreeFam" id="TF336410"/>
<dbReference type="PathwayCommons" id="Q9H091"/>
<dbReference type="BioGRID-ORCS" id="84225">
    <property type="hits" value="8 hits in 1143 CRISPR screens"/>
</dbReference>
<dbReference type="ChiTaRS" id="ZMYND15">
    <property type="organism name" value="human"/>
</dbReference>
<dbReference type="GenomeRNAi" id="84225"/>
<dbReference type="Pharos" id="Q9H091">
    <property type="development level" value="Tdark"/>
</dbReference>
<dbReference type="PRO" id="PR:Q9H091"/>
<dbReference type="Proteomes" id="UP000005640">
    <property type="component" value="Chromosome 17"/>
</dbReference>
<dbReference type="RNAct" id="Q9H091">
    <property type="molecule type" value="protein"/>
</dbReference>
<dbReference type="Bgee" id="ENSG00000141497">
    <property type="expression patterns" value="Expressed in left testis and 96 other cell types or tissues"/>
</dbReference>
<dbReference type="GO" id="GO:0005737">
    <property type="term" value="C:cytoplasm"/>
    <property type="evidence" value="ECO:0007669"/>
    <property type="project" value="UniProtKB-SubCell"/>
</dbReference>
<dbReference type="GO" id="GO:0001673">
    <property type="term" value="C:male germ cell nucleus"/>
    <property type="evidence" value="ECO:0007669"/>
    <property type="project" value="Ensembl"/>
</dbReference>
<dbReference type="GO" id="GO:0042826">
    <property type="term" value="F:histone deacetylase binding"/>
    <property type="evidence" value="ECO:0000318"/>
    <property type="project" value="GO_Central"/>
</dbReference>
<dbReference type="GO" id="GO:0008270">
    <property type="term" value="F:zinc ion binding"/>
    <property type="evidence" value="ECO:0007669"/>
    <property type="project" value="UniProtKB-KW"/>
</dbReference>
<dbReference type="GO" id="GO:0045892">
    <property type="term" value="P:negative regulation of DNA-templated transcription"/>
    <property type="evidence" value="ECO:0000318"/>
    <property type="project" value="GO_Central"/>
</dbReference>
<dbReference type="GO" id="GO:0007286">
    <property type="term" value="P:spermatid development"/>
    <property type="evidence" value="ECO:0000318"/>
    <property type="project" value="GO_Central"/>
</dbReference>
<dbReference type="Gene3D" id="6.10.140.2220">
    <property type="match status" value="1"/>
</dbReference>
<dbReference type="InterPro" id="IPR046824">
    <property type="entry name" value="Mss51-like_C"/>
</dbReference>
<dbReference type="InterPro" id="IPR042989">
    <property type="entry name" value="ZMY15"/>
</dbReference>
<dbReference type="InterPro" id="IPR002893">
    <property type="entry name" value="Znf_MYND"/>
</dbReference>
<dbReference type="PANTHER" id="PTHR47085">
    <property type="entry name" value="ZINC FINGER MYND DOMAIN-CONTAINING PROTEIN 15"/>
    <property type="match status" value="1"/>
</dbReference>
<dbReference type="PANTHER" id="PTHR47085:SF1">
    <property type="entry name" value="ZINC FINGER MYND DOMAIN-CONTAINING PROTEIN 15"/>
    <property type="match status" value="1"/>
</dbReference>
<dbReference type="Pfam" id="PF20179">
    <property type="entry name" value="MSS51_C"/>
    <property type="match status" value="1"/>
</dbReference>
<dbReference type="Pfam" id="PF01753">
    <property type="entry name" value="zf-MYND"/>
    <property type="match status" value="1"/>
</dbReference>
<dbReference type="SUPFAM" id="SSF144232">
    <property type="entry name" value="HIT/MYND zinc finger-like"/>
    <property type="match status" value="1"/>
</dbReference>
<dbReference type="PROSITE" id="PS50865">
    <property type="entry name" value="ZF_MYND_2"/>
    <property type="match status" value="1"/>
</dbReference>
<keyword id="KW-0025">Alternative splicing</keyword>
<keyword id="KW-0963">Cytoplasm</keyword>
<keyword id="KW-0221">Differentiation</keyword>
<keyword id="KW-0479">Metal-binding</keyword>
<keyword id="KW-0539">Nucleus</keyword>
<keyword id="KW-1267">Proteomics identification</keyword>
<keyword id="KW-1185">Reference proteome</keyword>
<keyword id="KW-0744">Spermatogenesis</keyword>
<keyword id="KW-0804">Transcription</keyword>
<keyword id="KW-0805">Transcription regulation</keyword>
<keyword id="KW-0862">Zinc</keyword>
<keyword id="KW-0863">Zinc-finger</keyword>
<name>ZMY15_HUMAN</name>
<sequence>MEFVSGYRDEFLDFTALLFGWFRKFVAERGAVGTSLEGRCRQLEAQIRRLPQDPALWVLHVLPNHSVGISLGQGAEPGPGPGLGTAWLLGDNPPLHLRDLSPYISFVSLEDGEEGEEEEEEDEEEEKREDGGAGSTEKVEPEEDRELAPTSRESPQETNPPGESEEAAREAGGGKDGCREDRVENETRPQKRKGQRSEAAPLHVSCLLLVTDEHGTILGIDLLVDGAQGTASWGSGTKDLAPWAYALLCHSMACPMGSGDPRKPRQLTVGDARLHRELESLVPRLGVKLAKTPMRTWGPRPGFTFASLRARTCHVCHRHSFEAKLTPCPQCSAVLYCGEACLRADWQRCPDDVSHRFWCPRLAAFMERAGELATLPFTYTAEVTSETFNKEAFLASRGLTRGYWTQLSMLIPGPGFSRHPRGNTPSLSLLRGGDPYQLLQGDGTALMPPVPPHPPRGVFGSWQDYYTWRGLSLDSPIAVLLTYPLTVYYVITHLVPQSFPELNIQNKQSLKIHVVEAGKEFDLVMVFWELLVLLPHVALELQFVGDGLPPESDEQHFTLQRDSLEVSVRPGSGISARPSSGTKEKGGRRDLQIKVSARPYHLFQGPKPDLVIGFNSGFALKDTWLRSLPRLQSLRVPAFFTESSEYSCVMDGQTMAVATGGGTSPPQPNPFRSPFRLRAADNCMSWYCNAFIFHLVYKPAQGSGARPAPGPPPPSPTPSAPPAPTRRRRGEKKPGRGARRRK</sequence>
<comment type="function">
    <text evidence="2 8">Acts as a transcriptional repressor through interaction with histone deacetylases (HDACs). May be important for spermiogenesis.</text>
</comment>
<comment type="subunit">
    <text evidence="1">Interacts with HDAC1, HDAC3, HDAC6 and, to a lesser extent, with HDAC7.</text>
</comment>
<comment type="subcellular location">
    <subcellularLocation>
        <location evidence="1">Nucleus</location>
    </subcellularLocation>
    <subcellularLocation>
        <location evidence="1">Cytoplasm</location>
    </subcellularLocation>
</comment>
<comment type="alternative products">
    <event type="alternative splicing"/>
    <isoform>
        <id>Q9H091-1</id>
        <name>1</name>
        <sequence type="displayed"/>
    </isoform>
    <isoform>
        <id>Q9H091-2</id>
        <name>2</name>
        <sequence type="described" ref="VSP_042144"/>
    </isoform>
    <isoform>
        <id>Q9H091-3</id>
        <name>3</name>
        <sequence type="described" ref="VSP_047208"/>
    </isoform>
</comment>
<comment type="disease" evidence="5">
    <disease id="DI-04124">
        <name>Spermatogenic failure 14</name>
        <acronym>SPGF14</acronym>
        <description>A disorder resulting in the absence (azoospermia) or reduction (oligozoospermia) of sperm in the semen, leading to male infertility.</description>
        <dbReference type="MIM" id="615842"/>
    </disease>
    <text>The disease is caused by variants affecting the gene represented in this entry.</text>
</comment>
<proteinExistence type="evidence at protein level"/>
<protein>
    <recommendedName>
        <fullName>Zinc finger MYND domain-containing protein 15</fullName>
    </recommendedName>
</protein>